<gene>
    <name evidence="1" type="primary">rnpA</name>
    <name type="ordered locus">BC_5489</name>
</gene>
<keyword id="KW-0255">Endonuclease</keyword>
<keyword id="KW-0378">Hydrolase</keyword>
<keyword id="KW-0540">Nuclease</keyword>
<keyword id="KW-1185">Reference proteome</keyword>
<keyword id="KW-0694">RNA-binding</keyword>
<keyword id="KW-0819">tRNA processing</keyword>
<evidence type="ECO:0000255" key="1">
    <source>
        <dbReference type="HAMAP-Rule" id="MF_00227"/>
    </source>
</evidence>
<accession>Q814F3</accession>
<organism>
    <name type="scientific">Bacillus cereus (strain ATCC 14579 / DSM 31 / CCUG 7414 / JCM 2152 / NBRC 15305 / NCIMB 9373 / NCTC 2599 / NRRL B-3711)</name>
    <dbReference type="NCBI Taxonomy" id="226900"/>
    <lineage>
        <taxon>Bacteria</taxon>
        <taxon>Bacillati</taxon>
        <taxon>Bacillota</taxon>
        <taxon>Bacilli</taxon>
        <taxon>Bacillales</taxon>
        <taxon>Bacillaceae</taxon>
        <taxon>Bacillus</taxon>
        <taxon>Bacillus cereus group</taxon>
    </lineage>
</organism>
<dbReference type="EC" id="3.1.26.5" evidence="1"/>
<dbReference type="EMBL" id="AE016877">
    <property type="protein sequence ID" value="AAP12343.1"/>
    <property type="molecule type" value="Genomic_DNA"/>
</dbReference>
<dbReference type="RefSeq" id="NP_835142.1">
    <property type="nucleotide sequence ID" value="NC_004722.1"/>
</dbReference>
<dbReference type="SMR" id="Q814F3"/>
<dbReference type="STRING" id="226900.BC_5489"/>
<dbReference type="KEGG" id="bce:BC5489"/>
<dbReference type="PATRIC" id="fig|226900.8.peg.5667"/>
<dbReference type="HOGENOM" id="CLU_117179_9_1_9"/>
<dbReference type="Proteomes" id="UP000001417">
    <property type="component" value="Chromosome"/>
</dbReference>
<dbReference type="GO" id="GO:0030677">
    <property type="term" value="C:ribonuclease P complex"/>
    <property type="evidence" value="ECO:0000318"/>
    <property type="project" value="GO_Central"/>
</dbReference>
<dbReference type="GO" id="GO:0042781">
    <property type="term" value="F:3'-tRNA processing endoribonuclease activity"/>
    <property type="evidence" value="ECO:0000318"/>
    <property type="project" value="GO_Central"/>
</dbReference>
<dbReference type="GO" id="GO:0004526">
    <property type="term" value="F:ribonuclease P activity"/>
    <property type="evidence" value="ECO:0000318"/>
    <property type="project" value="GO_Central"/>
</dbReference>
<dbReference type="GO" id="GO:0000049">
    <property type="term" value="F:tRNA binding"/>
    <property type="evidence" value="ECO:0007669"/>
    <property type="project" value="UniProtKB-UniRule"/>
</dbReference>
<dbReference type="GO" id="GO:0042780">
    <property type="term" value="P:tRNA 3'-end processing"/>
    <property type="evidence" value="ECO:0000318"/>
    <property type="project" value="GO_Central"/>
</dbReference>
<dbReference type="GO" id="GO:0001682">
    <property type="term" value="P:tRNA 5'-leader removal"/>
    <property type="evidence" value="ECO:0007669"/>
    <property type="project" value="UniProtKB-UniRule"/>
</dbReference>
<dbReference type="FunFam" id="3.30.230.10:FF:000021">
    <property type="entry name" value="Ribonuclease P protein component"/>
    <property type="match status" value="1"/>
</dbReference>
<dbReference type="Gene3D" id="3.30.230.10">
    <property type="match status" value="1"/>
</dbReference>
<dbReference type="HAMAP" id="MF_00227">
    <property type="entry name" value="RNase_P"/>
    <property type="match status" value="1"/>
</dbReference>
<dbReference type="InterPro" id="IPR020568">
    <property type="entry name" value="Ribosomal_Su5_D2-typ_SF"/>
</dbReference>
<dbReference type="InterPro" id="IPR014721">
    <property type="entry name" value="Ribsml_uS5_D2-typ_fold_subgr"/>
</dbReference>
<dbReference type="InterPro" id="IPR000100">
    <property type="entry name" value="RNase_P"/>
</dbReference>
<dbReference type="InterPro" id="IPR020539">
    <property type="entry name" value="RNase_P_CS"/>
</dbReference>
<dbReference type="NCBIfam" id="TIGR00188">
    <property type="entry name" value="rnpA"/>
    <property type="match status" value="1"/>
</dbReference>
<dbReference type="PANTHER" id="PTHR33992">
    <property type="entry name" value="RIBONUCLEASE P PROTEIN COMPONENT"/>
    <property type="match status" value="1"/>
</dbReference>
<dbReference type="PANTHER" id="PTHR33992:SF1">
    <property type="entry name" value="RIBONUCLEASE P PROTEIN COMPONENT"/>
    <property type="match status" value="1"/>
</dbReference>
<dbReference type="Pfam" id="PF00825">
    <property type="entry name" value="Ribonuclease_P"/>
    <property type="match status" value="1"/>
</dbReference>
<dbReference type="SUPFAM" id="SSF54211">
    <property type="entry name" value="Ribosomal protein S5 domain 2-like"/>
    <property type="match status" value="1"/>
</dbReference>
<dbReference type="PROSITE" id="PS00648">
    <property type="entry name" value="RIBONUCLEASE_P"/>
    <property type="match status" value="1"/>
</dbReference>
<feature type="chain" id="PRO_0000198419" description="Ribonuclease P protein component">
    <location>
        <begin position="1"/>
        <end position="119"/>
    </location>
</feature>
<name>RNPA_BACCR</name>
<reference key="1">
    <citation type="journal article" date="2003" name="Nature">
        <title>Genome sequence of Bacillus cereus and comparative analysis with Bacillus anthracis.</title>
        <authorList>
            <person name="Ivanova N."/>
            <person name="Sorokin A."/>
            <person name="Anderson I."/>
            <person name="Galleron N."/>
            <person name="Candelon B."/>
            <person name="Kapatral V."/>
            <person name="Bhattacharyya A."/>
            <person name="Reznik G."/>
            <person name="Mikhailova N."/>
            <person name="Lapidus A."/>
            <person name="Chu L."/>
            <person name="Mazur M."/>
            <person name="Goltsman E."/>
            <person name="Larsen N."/>
            <person name="D'Souza M."/>
            <person name="Walunas T."/>
            <person name="Grechkin Y."/>
            <person name="Pusch G."/>
            <person name="Haselkorn R."/>
            <person name="Fonstein M."/>
            <person name="Ehrlich S.D."/>
            <person name="Overbeek R."/>
            <person name="Kyrpides N.C."/>
        </authorList>
    </citation>
    <scope>NUCLEOTIDE SEQUENCE [LARGE SCALE GENOMIC DNA]</scope>
    <source>
        <strain>ATCC 14579 / DSM 31 / CCUG 7414 / JCM 2152 / NBRC 15305 / NCIMB 9373 / NCTC 2599 / NRRL B-3711</strain>
    </source>
</reference>
<proteinExistence type="inferred from homology"/>
<protein>
    <recommendedName>
        <fullName evidence="1">Ribonuclease P protein component</fullName>
        <shortName evidence="1">RNase P protein</shortName>
        <shortName evidence="1">RNaseP protein</shortName>
        <ecNumber evidence="1">3.1.26.5</ecNumber>
    </recommendedName>
    <alternativeName>
        <fullName evidence="1">Protein C5</fullName>
    </alternativeName>
</protein>
<sequence length="119" mass="13925">MSIDMKKKHRIKKNDEFQAVFQKGKSNANRQFVVYQLDKEEQPNFRIGLSVSKKIGNAVVRNRIKRMVRQAITELKDEIASGKDFVIIARKPCAEMTYEEVKKSLIHVFKRSGMKRIKK</sequence>
<comment type="function">
    <text evidence="1">RNaseP catalyzes the removal of the 5'-leader sequence from pre-tRNA to produce the mature 5'-terminus. It can also cleave other RNA substrates such as 4.5S RNA. The protein component plays an auxiliary but essential role in vivo by binding to the 5'-leader sequence and broadening the substrate specificity of the ribozyme.</text>
</comment>
<comment type="catalytic activity">
    <reaction evidence="1">
        <text>Endonucleolytic cleavage of RNA, removing 5'-extranucleotides from tRNA precursor.</text>
        <dbReference type="EC" id="3.1.26.5"/>
    </reaction>
</comment>
<comment type="subunit">
    <text evidence="1">Consists of a catalytic RNA component (M1 or rnpB) and a protein subunit.</text>
</comment>
<comment type="similarity">
    <text evidence="1">Belongs to the RnpA family.</text>
</comment>